<evidence type="ECO:0000250" key="1"/>
<evidence type="ECO:0000269" key="2">
    <source>
    </source>
</evidence>
<evidence type="ECO:0000305" key="3"/>
<name>GSH0_SCHPO</name>
<protein>
    <recommendedName>
        <fullName>Putative glutamate--cysteine ligase regulatory subunit</fullName>
    </recommendedName>
    <alternativeName>
        <fullName>GCS light chain</fullName>
    </alternativeName>
    <alternativeName>
        <fullName>Gamma-ECS regulatory subunit</fullName>
    </alternativeName>
    <alternativeName>
        <fullName>Gamma-glutamylcysteine synthetase regulatory subunit</fullName>
    </alternativeName>
    <alternativeName>
        <fullName>Glutamate--cysteine ligase modifier subunit</fullName>
    </alternativeName>
</protein>
<dbReference type="EMBL" id="CU329672">
    <property type="protein sequence ID" value="CAA20862.1"/>
    <property type="molecule type" value="Genomic_DNA"/>
</dbReference>
<dbReference type="PIR" id="T41579">
    <property type="entry name" value="T41579"/>
</dbReference>
<dbReference type="SMR" id="O94246"/>
<dbReference type="BioGRID" id="275632">
    <property type="interactions" value="24"/>
</dbReference>
<dbReference type="FunCoup" id="O94246">
    <property type="interactions" value="147"/>
</dbReference>
<dbReference type="STRING" id="284812.O94246"/>
<dbReference type="iPTMnet" id="O94246"/>
<dbReference type="PaxDb" id="4896-SPCC737.06c.1"/>
<dbReference type="EnsemblFungi" id="SPCC737.06c.1">
    <property type="protein sequence ID" value="SPCC737.06c.1:pep"/>
    <property type="gene ID" value="SPCC737.06c"/>
</dbReference>
<dbReference type="KEGG" id="spo:2539059"/>
<dbReference type="PomBase" id="SPCC737.06c"/>
<dbReference type="VEuPathDB" id="FungiDB:SPCC737.06c"/>
<dbReference type="eggNOG" id="KOG3023">
    <property type="taxonomic scope" value="Eukaryota"/>
</dbReference>
<dbReference type="HOGENOM" id="CLU_973728_0_0_1"/>
<dbReference type="InParanoid" id="O94246"/>
<dbReference type="OMA" id="AHEWIPL"/>
<dbReference type="PhylomeDB" id="O94246"/>
<dbReference type="Reactome" id="R-SPO-174403">
    <property type="pathway name" value="Glutathione synthesis and recycling"/>
</dbReference>
<dbReference type="UniPathway" id="UPA00142">
    <property type="reaction ID" value="UER00209"/>
</dbReference>
<dbReference type="PRO" id="PR:O94246"/>
<dbReference type="Proteomes" id="UP000002485">
    <property type="component" value="Chromosome III"/>
</dbReference>
<dbReference type="GO" id="GO:0005829">
    <property type="term" value="C:cytosol"/>
    <property type="evidence" value="ECO:0007005"/>
    <property type="project" value="PomBase"/>
</dbReference>
<dbReference type="GO" id="GO:0017109">
    <property type="term" value="C:glutamate-cysteine ligase complex"/>
    <property type="evidence" value="ECO:0000318"/>
    <property type="project" value="GO_Central"/>
</dbReference>
<dbReference type="GO" id="GO:0035226">
    <property type="term" value="F:glutamate-cysteine ligase catalytic subunit binding"/>
    <property type="evidence" value="ECO:0000318"/>
    <property type="project" value="GO_Central"/>
</dbReference>
<dbReference type="GO" id="GO:1990609">
    <property type="term" value="F:glutamate-cysteine ligase regulator activity"/>
    <property type="evidence" value="ECO:0000266"/>
    <property type="project" value="PomBase"/>
</dbReference>
<dbReference type="GO" id="GO:1990748">
    <property type="term" value="P:cellular detoxification"/>
    <property type="evidence" value="ECO:0000303"/>
    <property type="project" value="PomBase"/>
</dbReference>
<dbReference type="GO" id="GO:0006534">
    <property type="term" value="P:cysteine metabolic process"/>
    <property type="evidence" value="ECO:0000305"/>
    <property type="project" value="PomBase"/>
</dbReference>
<dbReference type="GO" id="GO:0006750">
    <property type="term" value="P:glutathione biosynthetic process"/>
    <property type="evidence" value="ECO:0000318"/>
    <property type="project" value="GO_Central"/>
</dbReference>
<dbReference type="Gene3D" id="3.20.20.100">
    <property type="entry name" value="NADP-dependent oxidoreductase domain"/>
    <property type="match status" value="1"/>
</dbReference>
<dbReference type="InterPro" id="IPR032963">
    <property type="entry name" value="Gclm"/>
</dbReference>
<dbReference type="InterPro" id="IPR036812">
    <property type="entry name" value="NADP_OxRdtase_dom_sf"/>
</dbReference>
<dbReference type="PANTHER" id="PTHR13295">
    <property type="entry name" value="GLUTAMATE CYSTEINE LIGASE REGULATORY SUBUNIT"/>
    <property type="match status" value="1"/>
</dbReference>
<dbReference type="PANTHER" id="PTHR13295:SF4">
    <property type="entry name" value="GLUTAMATE--CYSTEINE LIGASE REGULATORY SUBUNIT"/>
    <property type="match status" value="1"/>
</dbReference>
<dbReference type="SUPFAM" id="SSF51430">
    <property type="entry name" value="NAD(P)-linked oxidoreductase"/>
    <property type="match status" value="1"/>
</dbReference>
<accession>O94246</accession>
<comment type="pathway">
    <text>Sulfur metabolism; glutathione biosynthesis; glutathione from L-cysteine and L-glutamate: step 1/2.</text>
</comment>
<comment type="subunit">
    <text evidence="1">Heterodimer of a catalytic heavy chain and a regulatory light chain.</text>
</comment>
<comment type="subcellular location">
    <subcellularLocation>
        <location evidence="2">Cytoplasm</location>
    </subcellularLocation>
</comment>
<comment type="similarity">
    <text evidence="3">Belongs to the aldo/keto reductase family. Glutamate--cysteine ligase light chain subfamily.</text>
</comment>
<feature type="chain" id="PRO_0000310836" description="Putative glutamate--cysteine ligase regulatory subunit">
    <location>
        <begin position="1"/>
        <end position="287"/>
    </location>
</feature>
<keyword id="KW-0963">Cytoplasm</keyword>
<keyword id="KW-0317">Glutathione biosynthesis</keyword>
<keyword id="KW-1185">Reference proteome</keyword>
<gene>
    <name type="ORF">SPCC737.06c</name>
</gene>
<proteinExistence type="inferred from homology"/>
<reference key="1">
    <citation type="journal article" date="2002" name="Nature">
        <title>The genome sequence of Schizosaccharomyces pombe.</title>
        <authorList>
            <person name="Wood V."/>
            <person name="Gwilliam R."/>
            <person name="Rajandream M.A."/>
            <person name="Lyne M.H."/>
            <person name="Lyne R."/>
            <person name="Stewart A."/>
            <person name="Sgouros J.G."/>
            <person name="Peat N."/>
            <person name="Hayles J."/>
            <person name="Baker S.G."/>
            <person name="Basham D."/>
            <person name="Bowman S."/>
            <person name="Brooks K."/>
            <person name="Brown D."/>
            <person name="Brown S."/>
            <person name="Chillingworth T."/>
            <person name="Churcher C.M."/>
            <person name="Collins M."/>
            <person name="Connor R."/>
            <person name="Cronin A."/>
            <person name="Davis P."/>
            <person name="Feltwell T."/>
            <person name="Fraser A."/>
            <person name="Gentles S."/>
            <person name="Goble A."/>
            <person name="Hamlin N."/>
            <person name="Harris D.E."/>
            <person name="Hidalgo J."/>
            <person name="Hodgson G."/>
            <person name="Holroyd S."/>
            <person name="Hornsby T."/>
            <person name="Howarth S."/>
            <person name="Huckle E.J."/>
            <person name="Hunt S."/>
            <person name="Jagels K."/>
            <person name="James K.D."/>
            <person name="Jones L."/>
            <person name="Jones M."/>
            <person name="Leather S."/>
            <person name="McDonald S."/>
            <person name="McLean J."/>
            <person name="Mooney P."/>
            <person name="Moule S."/>
            <person name="Mungall K.L."/>
            <person name="Murphy L.D."/>
            <person name="Niblett D."/>
            <person name="Odell C."/>
            <person name="Oliver K."/>
            <person name="O'Neil S."/>
            <person name="Pearson D."/>
            <person name="Quail M.A."/>
            <person name="Rabbinowitsch E."/>
            <person name="Rutherford K.M."/>
            <person name="Rutter S."/>
            <person name="Saunders D."/>
            <person name="Seeger K."/>
            <person name="Sharp S."/>
            <person name="Skelton J."/>
            <person name="Simmonds M.N."/>
            <person name="Squares R."/>
            <person name="Squares S."/>
            <person name="Stevens K."/>
            <person name="Taylor K."/>
            <person name="Taylor R.G."/>
            <person name="Tivey A."/>
            <person name="Walsh S.V."/>
            <person name="Warren T."/>
            <person name="Whitehead S."/>
            <person name="Woodward J.R."/>
            <person name="Volckaert G."/>
            <person name="Aert R."/>
            <person name="Robben J."/>
            <person name="Grymonprez B."/>
            <person name="Weltjens I."/>
            <person name="Vanstreels E."/>
            <person name="Rieger M."/>
            <person name="Schaefer M."/>
            <person name="Mueller-Auer S."/>
            <person name="Gabel C."/>
            <person name="Fuchs M."/>
            <person name="Duesterhoeft A."/>
            <person name="Fritzc C."/>
            <person name="Holzer E."/>
            <person name="Moestl D."/>
            <person name="Hilbert H."/>
            <person name="Borzym K."/>
            <person name="Langer I."/>
            <person name="Beck A."/>
            <person name="Lehrach H."/>
            <person name="Reinhardt R."/>
            <person name="Pohl T.M."/>
            <person name="Eger P."/>
            <person name="Zimmermann W."/>
            <person name="Wedler H."/>
            <person name="Wambutt R."/>
            <person name="Purnelle B."/>
            <person name="Goffeau A."/>
            <person name="Cadieu E."/>
            <person name="Dreano S."/>
            <person name="Gloux S."/>
            <person name="Lelaure V."/>
            <person name="Mottier S."/>
            <person name="Galibert F."/>
            <person name="Aves S.J."/>
            <person name="Xiang Z."/>
            <person name="Hunt C."/>
            <person name="Moore K."/>
            <person name="Hurst S.M."/>
            <person name="Lucas M."/>
            <person name="Rochet M."/>
            <person name="Gaillardin C."/>
            <person name="Tallada V.A."/>
            <person name="Garzon A."/>
            <person name="Thode G."/>
            <person name="Daga R.R."/>
            <person name="Cruzado L."/>
            <person name="Jimenez J."/>
            <person name="Sanchez M."/>
            <person name="del Rey F."/>
            <person name="Benito J."/>
            <person name="Dominguez A."/>
            <person name="Revuelta J.L."/>
            <person name="Moreno S."/>
            <person name="Armstrong J."/>
            <person name="Forsburg S.L."/>
            <person name="Cerutti L."/>
            <person name="Lowe T."/>
            <person name="McCombie W.R."/>
            <person name="Paulsen I."/>
            <person name="Potashkin J."/>
            <person name="Shpakovski G.V."/>
            <person name="Ussery D."/>
            <person name="Barrell B.G."/>
            <person name="Nurse P."/>
        </authorList>
    </citation>
    <scope>NUCLEOTIDE SEQUENCE [LARGE SCALE GENOMIC DNA]</scope>
    <source>
        <strain>972 / ATCC 24843</strain>
    </source>
</reference>
<reference key="2">
    <citation type="journal article" date="2006" name="Nat. Biotechnol.">
        <title>ORFeome cloning and global analysis of protein localization in the fission yeast Schizosaccharomyces pombe.</title>
        <authorList>
            <person name="Matsuyama A."/>
            <person name="Arai R."/>
            <person name="Yashiroda Y."/>
            <person name="Shirai A."/>
            <person name="Kamata A."/>
            <person name="Sekido S."/>
            <person name="Kobayashi Y."/>
            <person name="Hashimoto A."/>
            <person name="Hamamoto M."/>
            <person name="Hiraoka Y."/>
            <person name="Horinouchi S."/>
            <person name="Yoshida M."/>
        </authorList>
    </citation>
    <scope>SUBCELLULAR LOCATION [LARGE SCALE ANALYSIS]</scope>
</reference>
<sequence>MIQNEKKHLILYTGDVTKNLKSGIWNASRIKSNLELVKALENVKLTKFTGDGDENLKKNIKVLVPVNEKPQKLDGKQEEYEIIVKLFFLDGENIDIKKREETLSQVFYNLHMLFGIDFVSTLVVSFPHITFLKESGNSSSNEIYDSIDEIPPQEIQSWVDTWKLLEEKVGEGKIGTLGVSEFGVNELQRLISSVNVVPESTQINIGQNCKLPNDLLNFADRHHLKLFFHSDPSALLSESEITSVIHKACPEIPNPARVDWVIRYTILTRHTAVIHQKGYIVQSTYTE</sequence>
<organism>
    <name type="scientific">Schizosaccharomyces pombe (strain 972 / ATCC 24843)</name>
    <name type="common">Fission yeast</name>
    <dbReference type="NCBI Taxonomy" id="284812"/>
    <lineage>
        <taxon>Eukaryota</taxon>
        <taxon>Fungi</taxon>
        <taxon>Dikarya</taxon>
        <taxon>Ascomycota</taxon>
        <taxon>Taphrinomycotina</taxon>
        <taxon>Schizosaccharomycetes</taxon>
        <taxon>Schizosaccharomycetales</taxon>
        <taxon>Schizosaccharomycetaceae</taxon>
        <taxon>Schizosaccharomyces</taxon>
    </lineage>
</organism>